<protein>
    <recommendedName>
        <fullName evidence="1">UPF0248 protein Mevan_1298</fullName>
    </recommendedName>
</protein>
<sequence>MLKELINRLLWHPKSSPKDYVIIYLHRGAPDNKKSISVNNIIINDSFLVFNETHIPFHRILEIKNLKTGEILYKKVDIDGLR</sequence>
<comment type="similarity">
    <text evidence="1">Belongs to the UPF0248 family.</text>
</comment>
<proteinExistence type="inferred from homology"/>
<dbReference type="EMBL" id="CP000742">
    <property type="protein sequence ID" value="ABR55195.1"/>
    <property type="molecule type" value="Genomic_DNA"/>
</dbReference>
<dbReference type="RefSeq" id="WP_012066110.1">
    <property type="nucleotide sequence ID" value="NC_009634.1"/>
</dbReference>
<dbReference type="STRING" id="406327.Mevan_1298"/>
<dbReference type="GeneID" id="5324781"/>
<dbReference type="KEGG" id="mvn:Mevan_1298"/>
<dbReference type="eggNOG" id="arCOG01302">
    <property type="taxonomic scope" value="Archaea"/>
</dbReference>
<dbReference type="HOGENOM" id="CLU_172276_3_1_2"/>
<dbReference type="OrthoDB" id="14794at2157"/>
<dbReference type="Proteomes" id="UP000001107">
    <property type="component" value="Chromosome"/>
</dbReference>
<dbReference type="HAMAP" id="MF_01245">
    <property type="entry name" value="UPF0248"/>
    <property type="match status" value="1"/>
</dbReference>
<dbReference type="InterPro" id="IPR040459">
    <property type="entry name" value="MJ1316"/>
</dbReference>
<dbReference type="InterPro" id="IPR007547">
    <property type="entry name" value="UPF0248"/>
</dbReference>
<dbReference type="NCBIfam" id="NF003272">
    <property type="entry name" value="PRK04257.1"/>
    <property type="match status" value="1"/>
</dbReference>
<dbReference type="Pfam" id="PF04457">
    <property type="entry name" value="MJ1316"/>
    <property type="match status" value="1"/>
</dbReference>
<reference key="1">
    <citation type="submission" date="2007-06" db="EMBL/GenBank/DDBJ databases">
        <title>Complete sequence of Methanococcus vannielii SB.</title>
        <authorList>
            <consortium name="US DOE Joint Genome Institute"/>
            <person name="Copeland A."/>
            <person name="Lucas S."/>
            <person name="Lapidus A."/>
            <person name="Barry K."/>
            <person name="Glavina del Rio T."/>
            <person name="Dalin E."/>
            <person name="Tice H."/>
            <person name="Pitluck S."/>
            <person name="Chain P."/>
            <person name="Malfatti S."/>
            <person name="Shin M."/>
            <person name="Vergez L."/>
            <person name="Schmutz J."/>
            <person name="Larimer F."/>
            <person name="Land M."/>
            <person name="Hauser L."/>
            <person name="Kyrpides N."/>
            <person name="Anderson I."/>
            <person name="Sieprawska-Lupa M."/>
            <person name="Whitman W.B."/>
            <person name="Richardson P."/>
        </authorList>
    </citation>
    <scope>NUCLEOTIDE SEQUENCE [LARGE SCALE GENOMIC DNA]</scope>
    <source>
        <strain>ATCC 35089 / DSM 1224 / JCM 13029 / OCM 148 / SB</strain>
    </source>
</reference>
<organism>
    <name type="scientific">Methanococcus vannielii (strain ATCC 35089 / DSM 1224 / JCM 13029 / OCM 148 / SB)</name>
    <dbReference type="NCBI Taxonomy" id="406327"/>
    <lineage>
        <taxon>Archaea</taxon>
        <taxon>Methanobacteriati</taxon>
        <taxon>Methanobacteriota</taxon>
        <taxon>Methanomada group</taxon>
        <taxon>Methanococci</taxon>
        <taxon>Methanococcales</taxon>
        <taxon>Methanococcaceae</taxon>
        <taxon>Methanococcus</taxon>
    </lineage>
</organism>
<gene>
    <name type="ordered locus">Mevan_1298</name>
</gene>
<name>Y1298_METVS</name>
<accession>A6URS3</accession>
<feature type="chain" id="PRO_1000067074" description="UPF0248 protein Mevan_1298">
    <location>
        <begin position="1"/>
        <end position="82"/>
    </location>
</feature>
<evidence type="ECO:0000255" key="1">
    <source>
        <dbReference type="HAMAP-Rule" id="MF_01245"/>
    </source>
</evidence>